<reference key="1">
    <citation type="journal article" date="1991" name="J. Bacteriol.">
        <title>Selenoprotein A component of the glycine reductase complex from Clostridium purinolyticum: nucleotide sequence of the gene shows that selenocysteine is encoded by UGA.</title>
        <authorList>
            <person name="Garcia G.E."/>
            <person name="Stadtman T.C."/>
        </authorList>
    </citation>
    <scope>NUCLEOTIDE SEQUENCE [GENOMIC DNA]</scope>
    <scope>PARTIAL PROTEIN SEQUENCE</scope>
    <scope>SELENOCYSTEINE AT SEC-43</scope>
    <source>
        <strain>ATCC 33906 / DSM 1384 / WA1</strain>
    </source>
</reference>
<feature type="chain" id="PRO_0000194465" description="Glycine/sarcosine/betaine reductase complex component A">
    <location>
        <begin position="1"/>
        <end position="150"/>
    </location>
</feature>
<feature type="active site">
    <location>
        <position position="43"/>
    </location>
</feature>
<feature type="non-standard amino acid" description="Selenocysteine">
    <location>
        <position position="43"/>
    </location>
</feature>
<feature type="sequence conflict" description="In Ref. 1; AA sequence." evidence="1" ref="1">
    <original>R</original>
    <variation>D</variation>
    <location>
        <position position="14"/>
    </location>
</feature>
<gene>
    <name type="primary">grdA</name>
</gene>
<sequence length="150" mass="15762">MILQGKKVIAIGDRDGIPGPAIEECVKSAGAEIAFSSTECFVUTAAGAMDLEIQQKVKDAAESIGADNLVVVLGGAEAESSGLSAETVTTGDPTYAGPLAGVELGLKVYHVVEDELKAEFDEAIYEDQCGMMEMVLDVDGIKEEMNRVRG</sequence>
<keyword id="KW-0903">Direct protein sequencing</keyword>
<keyword id="KW-0560">Oxidoreductase</keyword>
<keyword id="KW-0712">Selenocysteine</keyword>
<organism>
    <name type="scientific">Gottschalkia purinilytica</name>
    <name type="common">Clostridium purinilyticum</name>
    <dbReference type="NCBI Taxonomy" id="1503"/>
    <lineage>
        <taxon>Bacteria</taxon>
        <taxon>Bacillati</taxon>
        <taxon>Bacillota</taxon>
        <taxon>Tissierellia</taxon>
        <taxon>Tissierellales</taxon>
        <taxon>Gottschalkiaceae</taxon>
        <taxon>Gottschalkia</taxon>
    </lineage>
</organism>
<evidence type="ECO:0000305" key="1"/>
<dbReference type="EC" id="1.21.4.2"/>
<dbReference type="EC" id="1.21.4.3"/>
<dbReference type="EC" id="1.21.4.4"/>
<dbReference type="EMBL" id="M64374">
    <property type="protein sequence ID" value="AAB02121.2"/>
    <property type="molecule type" value="Genomic_DNA"/>
</dbReference>
<dbReference type="PIR" id="A38540">
    <property type="entry name" value="A38540"/>
</dbReference>
<dbReference type="BioCyc" id="MetaCyc:MONOMER-13142"/>
<dbReference type="GO" id="GO:0030700">
    <property type="term" value="C:glycine reductase complex"/>
    <property type="evidence" value="ECO:0007669"/>
    <property type="project" value="InterPro"/>
</dbReference>
<dbReference type="GO" id="GO:0033795">
    <property type="term" value="F:betaine reductase activity"/>
    <property type="evidence" value="ECO:0007669"/>
    <property type="project" value="UniProtKB-EC"/>
</dbReference>
<dbReference type="GO" id="GO:0030699">
    <property type="term" value="F:glycine reductase activity"/>
    <property type="evidence" value="ECO:0007669"/>
    <property type="project" value="UniProtKB-UniRule"/>
</dbReference>
<dbReference type="GO" id="GO:0033794">
    <property type="term" value="F:sarcosine reductase activity"/>
    <property type="evidence" value="ECO:0007669"/>
    <property type="project" value="UniProtKB-EC"/>
</dbReference>
<dbReference type="HAMAP" id="MF_00826">
    <property type="entry name" value="GRDA"/>
    <property type="match status" value="1"/>
</dbReference>
<dbReference type="InterPro" id="IPR006812">
    <property type="entry name" value="GRDA"/>
</dbReference>
<dbReference type="NCBIfam" id="NF040748">
    <property type="entry name" value="reduct_selen_A"/>
    <property type="match status" value="1"/>
</dbReference>
<dbReference type="Pfam" id="PF04723">
    <property type="entry name" value="GRDA"/>
    <property type="match status" value="1"/>
</dbReference>
<dbReference type="PIRSF" id="PIRSF000181">
    <property type="entry name" value="Grc_selenoprot_A"/>
    <property type="match status" value="1"/>
</dbReference>
<proteinExistence type="evidence at protein level"/>
<protein>
    <recommendedName>
        <fullName>Glycine/sarcosine/betaine reductase complex component A</fullName>
        <ecNumber>1.21.4.2</ecNumber>
        <ecNumber>1.21.4.3</ecNumber>
        <ecNumber>1.21.4.4</ecNumber>
    </recommendedName>
    <alternativeName>
        <fullName>Selenoprotein PA</fullName>
    </alternativeName>
    <alternativeName>
        <fullName>Thioredoxin reductase complex selenoprotein A</fullName>
    </alternativeName>
</protein>
<accession>P26970</accession>
<comment type="function">
    <text>In the first step of glycine, betaine and sarcosine reductases, the substrate is bound to component PB via a Schiff base intermediate. Then the PB-activated substrate is nucleophilically attacked by the selenol anion of component PA to transform it to a carboxymethylated selenoether and the respective amine. By action of component PC, acetyl phosphate is formed, leaving component PA in its oxidized state. Finally component PA becomes reduced by the thioredoxin system to start a new catalytic cycle of reductive deamination.</text>
</comment>
<comment type="catalytic activity">
    <reaction>
        <text>acetyl phosphate + [thioredoxin]-disulfide + NH4(+) + H2O = [thioredoxin]-dithiol + glycine + phosphate + H(+)</text>
        <dbReference type="Rhea" id="RHEA:12232"/>
        <dbReference type="Rhea" id="RHEA-COMP:10698"/>
        <dbReference type="Rhea" id="RHEA-COMP:10700"/>
        <dbReference type="ChEBI" id="CHEBI:15377"/>
        <dbReference type="ChEBI" id="CHEBI:15378"/>
        <dbReference type="ChEBI" id="CHEBI:22191"/>
        <dbReference type="ChEBI" id="CHEBI:28938"/>
        <dbReference type="ChEBI" id="CHEBI:29950"/>
        <dbReference type="ChEBI" id="CHEBI:43474"/>
        <dbReference type="ChEBI" id="CHEBI:50058"/>
        <dbReference type="ChEBI" id="CHEBI:57305"/>
        <dbReference type="EC" id="1.21.4.2"/>
    </reaction>
</comment>
<comment type="catalytic activity">
    <reaction>
        <text>acetyl phosphate + methylamine + [thioredoxin]-disulfide + H2O = sarcosine + [thioredoxin]-dithiol + phosphate + H(+)</text>
        <dbReference type="Rhea" id="RHEA:12825"/>
        <dbReference type="Rhea" id="RHEA-COMP:10698"/>
        <dbReference type="Rhea" id="RHEA-COMP:10700"/>
        <dbReference type="ChEBI" id="CHEBI:15377"/>
        <dbReference type="ChEBI" id="CHEBI:15378"/>
        <dbReference type="ChEBI" id="CHEBI:22191"/>
        <dbReference type="ChEBI" id="CHEBI:29950"/>
        <dbReference type="ChEBI" id="CHEBI:43474"/>
        <dbReference type="ChEBI" id="CHEBI:50058"/>
        <dbReference type="ChEBI" id="CHEBI:57433"/>
        <dbReference type="ChEBI" id="CHEBI:59338"/>
        <dbReference type="EC" id="1.21.4.3"/>
    </reaction>
</comment>
<comment type="catalytic activity">
    <reaction>
        <text>acetyl phosphate + trimethylamine + [thioredoxin]-disulfide + H2O = glycine betaine + [thioredoxin]-dithiol + phosphate + H(+)</text>
        <dbReference type="Rhea" id="RHEA:11848"/>
        <dbReference type="Rhea" id="RHEA-COMP:10698"/>
        <dbReference type="Rhea" id="RHEA-COMP:10700"/>
        <dbReference type="ChEBI" id="CHEBI:15377"/>
        <dbReference type="ChEBI" id="CHEBI:15378"/>
        <dbReference type="ChEBI" id="CHEBI:17750"/>
        <dbReference type="ChEBI" id="CHEBI:22191"/>
        <dbReference type="ChEBI" id="CHEBI:29950"/>
        <dbReference type="ChEBI" id="CHEBI:43474"/>
        <dbReference type="ChEBI" id="CHEBI:50058"/>
        <dbReference type="ChEBI" id="CHEBI:58389"/>
        <dbReference type="EC" id="1.21.4.4"/>
    </reaction>
</comment>
<comment type="subunit">
    <text>Monomer. Component of the glycine, sarcosine and betaine reductase complexes, together with components B and C.</text>
</comment>
<comment type="similarity">
    <text evidence="1">Belongs to the GrdA family.</text>
</comment>
<name>GRDA_GOTPU</name>